<dbReference type="EMBL" id="AE014299">
    <property type="protein sequence ID" value="AAN56306.1"/>
    <property type="molecule type" value="Genomic_DNA"/>
</dbReference>
<dbReference type="RefSeq" id="NP_718862.1">
    <property type="nucleotide sequence ID" value="NC_004347.2"/>
</dbReference>
<dbReference type="RefSeq" id="WP_011073184.1">
    <property type="nucleotide sequence ID" value="NC_004347.2"/>
</dbReference>
<dbReference type="SMR" id="Q8EC36"/>
<dbReference type="STRING" id="211586.SO_3308"/>
<dbReference type="PaxDb" id="211586-SO_3308"/>
<dbReference type="KEGG" id="son:SO_3308"/>
<dbReference type="PATRIC" id="fig|1028802.3.peg.1150"/>
<dbReference type="eggNOG" id="COG1160">
    <property type="taxonomic scope" value="Bacteria"/>
</dbReference>
<dbReference type="HOGENOM" id="CLU_016077_6_2_6"/>
<dbReference type="OrthoDB" id="9805918at2"/>
<dbReference type="PhylomeDB" id="Q8EC36"/>
<dbReference type="BioCyc" id="SONE211586:G1GMP-3080-MONOMER"/>
<dbReference type="Proteomes" id="UP000008186">
    <property type="component" value="Chromosome"/>
</dbReference>
<dbReference type="GO" id="GO:0005525">
    <property type="term" value="F:GTP binding"/>
    <property type="evidence" value="ECO:0007669"/>
    <property type="project" value="UniProtKB-UniRule"/>
</dbReference>
<dbReference type="GO" id="GO:0043022">
    <property type="term" value="F:ribosome binding"/>
    <property type="evidence" value="ECO:0000318"/>
    <property type="project" value="GO_Central"/>
</dbReference>
<dbReference type="GO" id="GO:0042254">
    <property type="term" value="P:ribosome biogenesis"/>
    <property type="evidence" value="ECO:0007669"/>
    <property type="project" value="UniProtKB-KW"/>
</dbReference>
<dbReference type="CDD" id="cd01894">
    <property type="entry name" value="EngA1"/>
    <property type="match status" value="1"/>
</dbReference>
<dbReference type="CDD" id="cd01895">
    <property type="entry name" value="EngA2"/>
    <property type="match status" value="1"/>
</dbReference>
<dbReference type="FunFam" id="3.30.300.20:FF:000004">
    <property type="entry name" value="GTPase Der"/>
    <property type="match status" value="1"/>
</dbReference>
<dbReference type="FunFam" id="3.40.50.300:FF:000040">
    <property type="entry name" value="GTPase Der"/>
    <property type="match status" value="1"/>
</dbReference>
<dbReference type="FunFam" id="3.40.50.300:FF:000057">
    <property type="entry name" value="GTPase Der"/>
    <property type="match status" value="1"/>
</dbReference>
<dbReference type="Gene3D" id="3.30.300.20">
    <property type="match status" value="1"/>
</dbReference>
<dbReference type="Gene3D" id="3.40.50.300">
    <property type="entry name" value="P-loop containing nucleotide triphosphate hydrolases"/>
    <property type="match status" value="2"/>
</dbReference>
<dbReference type="HAMAP" id="MF_00195">
    <property type="entry name" value="GTPase_Der"/>
    <property type="match status" value="1"/>
</dbReference>
<dbReference type="InterPro" id="IPR031166">
    <property type="entry name" value="G_ENGA"/>
</dbReference>
<dbReference type="InterPro" id="IPR006073">
    <property type="entry name" value="GTP-bd"/>
</dbReference>
<dbReference type="InterPro" id="IPR016484">
    <property type="entry name" value="GTPase_Der"/>
</dbReference>
<dbReference type="InterPro" id="IPR032859">
    <property type="entry name" value="KH_dom-like"/>
</dbReference>
<dbReference type="InterPro" id="IPR015946">
    <property type="entry name" value="KH_dom-like_a/b"/>
</dbReference>
<dbReference type="InterPro" id="IPR027417">
    <property type="entry name" value="P-loop_NTPase"/>
</dbReference>
<dbReference type="InterPro" id="IPR005225">
    <property type="entry name" value="Small_GTP-bd"/>
</dbReference>
<dbReference type="NCBIfam" id="TIGR03594">
    <property type="entry name" value="GTPase_EngA"/>
    <property type="match status" value="1"/>
</dbReference>
<dbReference type="NCBIfam" id="TIGR00231">
    <property type="entry name" value="small_GTP"/>
    <property type="match status" value="2"/>
</dbReference>
<dbReference type="PANTHER" id="PTHR43834">
    <property type="entry name" value="GTPASE DER"/>
    <property type="match status" value="1"/>
</dbReference>
<dbReference type="PANTHER" id="PTHR43834:SF6">
    <property type="entry name" value="GTPASE DER"/>
    <property type="match status" value="1"/>
</dbReference>
<dbReference type="Pfam" id="PF14714">
    <property type="entry name" value="KH_dom-like"/>
    <property type="match status" value="1"/>
</dbReference>
<dbReference type="Pfam" id="PF01926">
    <property type="entry name" value="MMR_HSR1"/>
    <property type="match status" value="2"/>
</dbReference>
<dbReference type="PIRSF" id="PIRSF006485">
    <property type="entry name" value="GTP-binding_EngA"/>
    <property type="match status" value="1"/>
</dbReference>
<dbReference type="PRINTS" id="PR00326">
    <property type="entry name" value="GTP1OBG"/>
</dbReference>
<dbReference type="SUPFAM" id="SSF52540">
    <property type="entry name" value="P-loop containing nucleoside triphosphate hydrolases"/>
    <property type="match status" value="2"/>
</dbReference>
<dbReference type="PROSITE" id="PS51712">
    <property type="entry name" value="G_ENGA"/>
    <property type="match status" value="2"/>
</dbReference>
<protein>
    <recommendedName>
        <fullName evidence="1">GTPase Der</fullName>
    </recommendedName>
    <alternativeName>
        <fullName evidence="1">GTP-binding protein EngA</fullName>
    </alternativeName>
</protein>
<comment type="function">
    <text evidence="1">GTPase that plays an essential role in the late steps of ribosome biogenesis.</text>
</comment>
<comment type="subunit">
    <text evidence="1">Associates with the 50S ribosomal subunit.</text>
</comment>
<comment type="similarity">
    <text evidence="1">Belongs to the TRAFAC class TrmE-Era-EngA-EngB-Septin-like GTPase superfamily. EngA (Der) GTPase family.</text>
</comment>
<keyword id="KW-0342">GTP-binding</keyword>
<keyword id="KW-0547">Nucleotide-binding</keyword>
<keyword id="KW-1185">Reference proteome</keyword>
<keyword id="KW-0677">Repeat</keyword>
<keyword id="KW-0690">Ribosome biogenesis</keyword>
<name>DER_SHEON</name>
<feature type="chain" id="PRO_0000179041" description="GTPase Der">
    <location>
        <begin position="1"/>
        <end position="487"/>
    </location>
</feature>
<feature type="domain" description="EngA-type G 1">
    <location>
        <begin position="3"/>
        <end position="166"/>
    </location>
</feature>
<feature type="domain" description="EngA-type G 2">
    <location>
        <begin position="199"/>
        <end position="372"/>
    </location>
</feature>
<feature type="domain" description="KH-like" evidence="1">
    <location>
        <begin position="373"/>
        <end position="457"/>
    </location>
</feature>
<feature type="binding site" evidence="1">
    <location>
        <begin position="9"/>
        <end position="16"/>
    </location>
    <ligand>
        <name>GTP</name>
        <dbReference type="ChEBI" id="CHEBI:37565"/>
        <label>1</label>
    </ligand>
</feature>
<feature type="binding site" evidence="1">
    <location>
        <begin position="56"/>
        <end position="60"/>
    </location>
    <ligand>
        <name>GTP</name>
        <dbReference type="ChEBI" id="CHEBI:37565"/>
        <label>1</label>
    </ligand>
</feature>
<feature type="binding site" evidence="1">
    <location>
        <begin position="118"/>
        <end position="121"/>
    </location>
    <ligand>
        <name>GTP</name>
        <dbReference type="ChEBI" id="CHEBI:37565"/>
        <label>1</label>
    </ligand>
</feature>
<feature type="binding site" evidence="1">
    <location>
        <begin position="205"/>
        <end position="212"/>
    </location>
    <ligand>
        <name>GTP</name>
        <dbReference type="ChEBI" id="CHEBI:37565"/>
        <label>2</label>
    </ligand>
</feature>
<feature type="binding site" evidence="1">
    <location>
        <begin position="252"/>
        <end position="256"/>
    </location>
    <ligand>
        <name>GTP</name>
        <dbReference type="ChEBI" id="CHEBI:37565"/>
        <label>2</label>
    </ligand>
</feature>
<feature type="binding site" evidence="1">
    <location>
        <begin position="317"/>
        <end position="320"/>
    </location>
    <ligand>
        <name>GTP</name>
        <dbReference type="ChEBI" id="CHEBI:37565"/>
        <label>2</label>
    </ligand>
</feature>
<sequence>MIPVVALVGRPNVGKSTLFNRLTRTRDALVADFPGLTRDRKYGRAFLSGYEFIVVDTGGIDGTEEGIETKMAEQSLAAIEEADVVLFMTDARAGLTAADLSIAQHLRSRQKTTFVVANKIDGIDADSACAEFWSLGLGEVYQMAAAQGRGVTNMIEYALTPYAEAMGIERQGEEEEVDERQYTEEEAEAEQKRLQDLPIKLAIIGKPNVGKSTLTNRILGEERVVVYDEPGTTRDSIYIPMERDGREYVIIDTAGVRRRSKVHEVIEKFSVIKTLKAVEDANVVLLIIDAREGVAEQDLGLLGFALNAGRALVIAVNKWDGIDQGIKDRVKSELDRRLGFIDFARIHFISALHGTGVGHLFESIEEAYDSATRRVSTSMLTRIMQMSQDDHQPPLVNGRRVKLKYAHAGGYNPPIVVIHGNQVSKLPDSYKRYMMNYFRRSLKVVGTPIQLRFQEGDNPFENKVEKLTMSQERRRKRALSHIKDRKK</sequence>
<accession>Q8EC36</accession>
<proteinExistence type="inferred from homology"/>
<evidence type="ECO:0000255" key="1">
    <source>
        <dbReference type="HAMAP-Rule" id="MF_00195"/>
    </source>
</evidence>
<reference key="1">
    <citation type="journal article" date="2002" name="Nat. Biotechnol.">
        <title>Genome sequence of the dissimilatory metal ion-reducing bacterium Shewanella oneidensis.</title>
        <authorList>
            <person name="Heidelberg J.F."/>
            <person name="Paulsen I.T."/>
            <person name="Nelson K.E."/>
            <person name="Gaidos E.J."/>
            <person name="Nelson W.C."/>
            <person name="Read T.D."/>
            <person name="Eisen J.A."/>
            <person name="Seshadri R."/>
            <person name="Ward N.L."/>
            <person name="Methe B.A."/>
            <person name="Clayton R.A."/>
            <person name="Meyer T."/>
            <person name="Tsapin A."/>
            <person name="Scott J."/>
            <person name="Beanan M.J."/>
            <person name="Brinkac L.M."/>
            <person name="Daugherty S.C."/>
            <person name="DeBoy R.T."/>
            <person name="Dodson R.J."/>
            <person name="Durkin A.S."/>
            <person name="Haft D.H."/>
            <person name="Kolonay J.F."/>
            <person name="Madupu R."/>
            <person name="Peterson J.D."/>
            <person name="Umayam L.A."/>
            <person name="White O."/>
            <person name="Wolf A.M."/>
            <person name="Vamathevan J.J."/>
            <person name="Weidman J.F."/>
            <person name="Impraim M."/>
            <person name="Lee K."/>
            <person name="Berry K.J."/>
            <person name="Lee C."/>
            <person name="Mueller J."/>
            <person name="Khouri H.M."/>
            <person name="Gill J."/>
            <person name="Utterback T.R."/>
            <person name="McDonald L.A."/>
            <person name="Feldblyum T.V."/>
            <person name="Smith H.O."/>
            <person name="Venter J.C."/>
            <person name="Nealson K.H."/>
            <person name="Fraser C.M."/>
        </authorList>
    </citation>
    <scope>NUCLEOTIDE SEQUENCE [LARGE SCALE GENOMIC DNA]</scope>
    <source>
        <strain>ATCC 700550 / JCM 31522 / CIP 106686 / LMG 19005 / NCIMB 14063 / MR-1</strain>
    </source>
</reference>
<gene>
    <name evidence="1" type="primary">der</name>
    <name type="synonym">engA</name>
    <name type="ordered locus">SO_3308</name>
</gene>
<organism>
    <name type="scientific">Shewanella oneidensis (strain ATCC 700550 / JCM 31522 / CIP 106686 / LMG 19005 / NCIMB 14063 / MR-1)</name>
    <dbReference type="NCBI Taxonomy" id="211586"/>
    <lineage>
        <taxon>Bacteria</taxon>
        <taxon>Pseudomonadati</taxon>
        <taxon>Pseudomonadota</taxon>
        <taxon>Gammaproteobacteria</taxon>
        <taxon>Alteromonadales</taxon>
        <taxon>Shewanellaceae</taxon>
        <taxon>Shewanella</taxon>
    </lineage>
</organism>